<dbReference type="EC" id="3.5.4.2"/>
<dbReference type="EMBL" id="Y15254">
    <property type="protein sequence ID" value="CAA75547.1"/>
    <property type="molecule type" value="Genomic_DNA"/>
</dbReference>
<dbReference type="EMBL" id="AF011544">
    <property type="protein sequence ID" value="AAB72188.1"/>
    <property type="molecule type" value="Genomic_DNA"/>
</dbReference>
<dbReference type="EMBL" id="AL009126">
    <property type="protein sequence ID" value="CAB12476.1"/>
    <property type="molecule type" value="Genomic_DNA"/>
</dbReference>
<dbReference type="PIR" id="H69793">
    <property type="entry name" value="H69793"/>
</dbReference>
<dbReference type="RefSeq" id="NP_388538.1">
    <property type="nucleotide sequence ID" value="NC_000964.3"/>
</dbReference>
<dbReference type="RefSeq" id="WP_003233929.1">
    <property type="nucleotide sequence ID" value="NZ_OZ025638.1"/>
</dbReference>
<dbReference type="SMR" id="O34909"/>
<dbReference type="FunCoup" id="O34909">
    <property type="interactions" value="108"/>
</dbReference>
<dbReference type="STRING" id="224308.BSU06560"/>
<dbReference type="iPTMnet" id="O34909"/>
<dbReference type="jPOST" id="O34909"/>
<dbReference type="PaxDb" id="224308-BSU06560"/>
<dbReference type="DNASU" id="939337"/>
<dbReference type="EnsemblBacteria" id="CAB12476">
    <property type="protein sequence ID" value="CAB12476"/>
    <property type="gene ID" value="BSU_06560"/>
</dbReference>
<dbReference type="GeneID" id="939337"/>
<dbReference type="KEGG" id="bsu:BSU06560"/>
<dbReference type="PATRIC" id="fig|224308.179.peg.713"/>
<dbReference type="eggNOG" id="COG1001">
    <property type="taxonomic scope" value="Bacteria"/>
</dbReference>
<dbReference type="InParanoid" id="O34909"/>
<dbReference type="OrthoDB" id="9775607at2"/>
<dbReference type="PhylomeDB" id="O34909"/>
<dbReference type="BioCyc" id="BSUB:BSU06560-MONOMER"/>
<dbReference type="Proteomes" id="UP000001570">
    <property type="component" value="Chromosome"/>
</dbReference>
<dbReference type="GO" id="GO:0000034">
    <property type="term" value="F:adenine deaminase activity"/>
    <property type="evidence" value="ECO:0000318"/>
    <property type="project" value="GO_Central"/>
</dbReference>
<dbReference type="GO" id="GO:0006146">
    <property type="term" value="P:adenine catabolic process"/>
    <property type="evidence" value="ECO:0007669"/>
    <property type="project" value="InterPro"/>
</dbReference>
<dbReference type="CDD" id="cd01295">
    <property type="entry name" value="AdeC"/>
    <property type="match status" value="1"/>
</dbReference>
<dbReference type="FunFam" id="3.20.20.140:FF:000067">
    <property type="entry name" value="Adenine deaminase"/>
    <property type="match status" value="1"/>
</dbReference>
<dbReference type="Gene3D" id="3.20.20.140">
    <property type="entry name" value="Metal-dependent hydrolases"/>
    <property type="match status" value="1"/>
</dbReference>
<dbReference type="Gene3D" id="2.30.40.10">
    <property type="entry name" value="Urease, subunit C, domain 1"/>
    <property type="match status" value="1"/>
</dbReference>
<dbReference type="InterPro" id="IPR006679">
    <property type="entry name" value="Adenine_deam"/>
</dbReference>
<dbReference type="InterPro" id="IPR026912">
    <property type="entry name" value="Adenine_deam_C"/>
</dbReference>
<dbReference type="InterPro" id="IPR006680">
    <property type="entry name" value="Amidohydro-rel"/>
</dbReference>
<dbReference type="InterPro" id="IPR011059">
    <property type="entry name" value="Metal-dep_hydrolase_composite"/>
</dbReference>
<dbReference type="InterPro" id="IPR032466">
    <property type="entry name" value="Metal_Hydrolase"/>
</dbReference>
<dbReference type="PANTHER" id="PTHR11113:SF6">
    <property type="entry name" value="ADENINE DEAMINASE YERA-RELATED"/>
    <property type="match status" value="1"/>
</dbReference>
<dbReference type="PANTHER" id="PTHR11113">
    <property type="entry name" value="N-ACETYLGLUCOSAMINE-6-PHOSPHATE DEACETYLASE"/>
    <property type="match status" value="1"/>
</dbReference>
<dbReference type="Pfam" id="PF13382">
    <property type="entry name" value="Adenine_deam_C"/>
    <property type="match status" value="1"/>
</dbReference>
<dbReference type="Pfam" id="PF01979">
    <property type="entry name" value="Amidohydro_1"/>
    <property type="match status" value="1"/>
</dbReference>
<dbReference type="SUPFAM" id="SSF51338">
    <property type="entry name" value="Composite domain of metallo-dependent hydrolases"/>
    <property type="match status" value="1"/>
</dbReference>
<dbReference type="SUPFAM" id="SSF51556">
    <property type="entry name" value="Metallo-dependent hydrolases"/>
    <property type="match status" value="1"/>
</dbReference>
<sequence length="580" mass="66646">MSERTFNWKNKDIRAQVDVVDSKLLPTLLLRNALVLNPYVKQWLKKNIWIYQDRIVYVGHELPNRAEEIHTIDCEGKYIVPGYIEPHAHPFQIYNPQTLAEYVSQYGTTTFVNDNLFLLLQSGKKKALTILNELKKQPVQYFWWSRYDLQTEVLNEDHVLPFDVRKQWIEHPDVIQGGEMTGWPRLVDGDDLMLHCMQATKKQRKRIEGHFPGASDKTLTKMKLFGADCDHEAMTGDEVMRRLELGYYVSLRNSSIRPDVRKILQELHEKGFRYYDHFFYTTDGATPNFYKGGMTNELIRIALEEGVPAIDAYNMASFNIAKYYQMDDYLGVVGPGRLASLNILEDPLNPNPVTVLSKGTILRENGCDLKAFTKTDWHKGGLVPLELSYDMTMDDLQFSMPMGVKMRNAVIMEPYMIEIDNSMEQLSFDHDESYLTMLDRHGKWRVNTMIKGFASSVQGFVSSFTTTGDIVAIGKNKADMLLAFARMKEIGGGIVLAENGNILHEIPLALCGCASSEAYEDVLEKEQKLRDLLTERGYEFCDPIYTLLFLQSTHLPYIRITPRGIFDVMKKTVLFPSIMR</sequence>
<proteinExistence type="evidence at protein level"/>
<evidence type="ECO:0000269" key="1">
    <source>
    </source>
</evidence>
<evidence type="ECO:0000305" key="2"/>
<gene>
    <name type="primary">yerA</name>
    <name type="synonym">yecB</name>
    <name type="ordered locus">BSU06560</name>
</gene>
<protein>
    <recommendedName>
        <fullName>Putative adenine deaminase YerA</fullName>
        <shortName>Adenase</shortName>
        <shortName>Adenine aminase</shortName>
        <ecNumber>3.5.4.2</ecNumber>
    </recommendedName>
</protein>
<accession>O34909</accession>
<accession>O30566</accession>
<reference key="1">
    <citation type="journal article" date="1998" name="Mol. Microbiol.">
        <title>PcrA is an essential DNA helicase of Bacillus subtilis fulfilling functions both in repair and rolling-circle replication.</title>
        <authorList>
            <person name="Petit M.-A."/>
            <person name="Dervyn E."/>
            <person name="Rose M."/>
            <person name="Entian K.-D."/>
            <person name="McGovern S."/>
            <person name="Ehrlich S.D."/>
            <person name="Bruand C."/>
        </authorList>
    </citation>
    <scope>NUCLEOTIDE SEQUENCE [GENOMIC DNA]</scope>
    <source>
        <strain>168</strain>
    </source>
</reference>
<reference key="2">
    <citation type="journal article" date="1996" name="Microbiology">
        <title>The 52 degrees-55 degrees segment of the Bacillus subtilis chromosome: a region devoted to purine uptake and metabolism, and containing the genes cotA, gabP and guaA and the pur gene cluster within a 34960 bp nucleotide sequence.</title>
        <authorList>
            <person name="Borriss R."/>
            <person name="Porwollik S."/>
            <person name="Schroeter R."/>
        </authorList>
    </citation>
    <scope>NUCLEOTIDE SEQUENCE [GENOMIC DNA]</scope>
    <source>
        <strain>168</strain>
    </source>
</reference>
<reference key="3">
    <citation type="journal article" date="1997" name="Nature">
        <title>The complete genome sequence of the Gram-positive bacterium Bacillus subtilis.</title>
        <authorList>
            <person name="Kunst F."/>
            <person name="Ogasawara N."/>
            <person name="Moszer I."/>
            <person name="Albertini A.M."/>
            <person name="Alloni G."/>
            <person name="Azevedo V."/>
            <person name="Bertero M.G."/>
            <person name="Bessieres P."/>
            <person name="Bolotin A."/>
            <person name="Borchert S."/>
            <person name="Borriss R."/>
            <person name="Boursier L."/>
            <person name="Brans A."/>
            <person name="Braun M."/>
            <person name="Brignell S.C."/>
            <person name="Bron S."/>
            <person name="Brouillet S."/>
            <person name="Bruschi C.V."/>
            <person name="Caldwell B."/>
            <person name="Capuano V."/>
            <person name="Carter N.M."/>
            <person name="Choi S.-K."/>
            <person name="Codani J.-J."/>
            <person name="Connerton I.F."/>
            <person name="Cummings N.J."/>
            <person name="Daniel R.A."/>
            <person name="Denizot F."/>
            <person name="Devine K.M."/>
            <person name="Duesterhoeft A."/>
            <person name="Ehrlich S.D."/>
            <person name="Emmerson P.T."/>
            <person name="Entian K.-D."/>
            <person name="Errington J."/>
            <person name="Fabret C."/>
            <person name="Ferrari E."/>
            <person name="Foulger D."/>
            <person name="Fritz C."/>
            <person name="Fujita M."/>
            <person name="Fujita Y."/>
            <person name="Fuma S."/>
            <person name="Galizzi A."/>
            <person name="Galleron N."/>
            <person name="Ghim S.-Y."/>
            <person name="Glaser P."/>
            <person name="Goffeau A."/>
            <person name="Golightly E.J."/>
            <person name="Grandi G."/>
            <person name="Guiseppi G."/>
            <person name="Guy B.J."/>
            <person name="Haga K."/>
            <person name="Haiech J."/>
            <person name="Harwood C.R."/>
            <person name="Henaut A."/>
            <person name="Hilbert H."/>
            <person name="Holsappel S."/>
            <person name="Hosono S."/>
            <person name="Hullo M.-F."/>
            <person name="Itaya M."/>
            <person name="Jones L.-M."/>
            <person name="Joris B."/>
            <person name="Karamata D."/>
            <person name="Kasahara Y."/>
            <person name="Klaerr-Blanchard M."/>
            <person name="Klein C."/>
            <person name="Kobayashi Y."/>
            <person name="Koetter P."/>
            <person name="Koningstein G."/>
            <person name="Krogh S."/>
            <person name="Kumano M."/>
            <person name="Kurita K."/>
            <person name="Lapidus A."/>
            <person name="Lardinois S."/>
            <person name="Lauber J."/>
            <person name="Lazarevic V."/>
            <person name="Lee S.-M."/>
            <person name="Levine A."/>
            <person name="Liu H."/>
            <person name="Masuda S."/>
            <person name="Mauel C."/>
            <person name="Medigue C."/>
            <person name="Medina N."/>
            <person name="Mellado R.P."/>
            <person name="Mizuno M."/>
            <person name="Moestl D."/>
            <person name="Nakai S."/>
            <person name="Noback M."/>
            <person name="Noone D."/>
            <person name="O'Reilly M."/>
            <person name="Ogawa K."/>
            <person name="Ogiwara A."/>
            <person name="Oudega B."/>
            <person name="Park S.-H."/>
            <person name="Parro V."/>
            <person name="Pohl T.M."/>
            <person name="Portetelle D."/>
            <person name="Porwollik S."/>
            <person name="Prescott A.M."/>
            <person name="Presecan E."/>
            <person name="Pujic P."/>
            <person name="Purnelle B."/>
            <person name="Rapoport G."/>
            <person name="Rey M."/>
            <person name="Reynolds S."/>
            <person name="Rieger M."/>
            <person name="Rivolta C."/>
            <person name="Rocha E."/>
            <person name="Roche B."/>
            <person name="Rose M."/>
            <person name="Sadaie Y."/>
            <person name="Sato T."/>
            <person name="Scanlan E."/>
            <person name="Schleich S."/>
            <person name="Schroeter R."/>
            <person name="Scoffone F."/>
            <person name="Sekiguchi J."/>
            <person name="Sekowska A."/>
            <person name="Seror S.J."/>
            <person name="Serror P."/>
            <person name="Shin B.-S."/>
            <person name="Soldo B."/>
            <person name="Sorokin A."/>
            <person name="Tacconi E."/>
            <person name="Takagi T."/>
            <person name="Takahashi H."/>
            <person name="Takemaru K."/>
            <person name="Takeuchi M."/>
            <person name="Tamakoshi A."/>
            <person name="Tanaka T."/>
            <person name="Terpstra P."/>
            <person name="Tognoni A."/>
            <person name="Tosato V."/>
            <person name="Uchiyama S."/>
            <person name="Vandenbol M."/>
            <person name="Vannier F."/>
            <person name="Vassarotti A."/>
            <person name="Viari A."/>
            <person name="Wambutt R."/>
            <person name="Wedler E."/>
            <person name="Wedler H."/>
            <person name="Weitzenegger T."/>
            <person name="Winters P."/>
            <person name="Wipat A."/>
            <person name="Yamamoto H."/>
            <person name="Yamane K."/>
            <person name="Yasumoto K."/>
            <person name="Yata K."/>
            <person name="Yoshida K."/>
            <person name="Yoshikawa H.-F."/>
            <person name="Zumstein E."/>
            <person name="Yoshikawa H."/>
            <person name="Danchin A."/>
        </authorList>
    </citation>
    <scope>NUCLEOTIDE SEQUENCE [LARGE SCALE GENOMIC DNA]</scope>
    <source>
        <strain>168</strain>
    </source>
</reference>
<reference key="4">
    <citation type="journal article" date="2007" name="Mol. Cell. Proteomics">
        <title>The serine/threonine/tyrosine phosphoproteome of the model bacterium Bacillus subtilis.</title>
        <authorList>
            <person name="Macek B."/>
            <person name="Mijakovic I."/>
            <person name="Olsen J.V."/>
            <person name="Gnad F."/>
            <person name="Kumar C."/>
            <person name="Jensen P.R."/>
            <person name="Mann M."/>
        </authorList>
    </citation>
    <scope>PHOSPHORYLATION [LARGE SCALE ANALYSIS] AT SER-399</scope>
    <scope>IDENTIFICATION BY MASS SPECTROMETRY</scope>
    <source>
        <strain>168</strain>
    </source>
</reference>
<keyword id="KW-0378">Hydrolase</keyword>
<keyword id="KW-0597">Phosphoprotein</keyword>
<keyword id="KW-1185">Reference proteome</keyword>
<comment type="catalytic activity">
    <reaction>
        <text>adenine + H2O + H(+) = hypoxanthine + NH4(+)</text>
        <dbReference type="Rhea" id="RHEA:23688"/>
        <dbReference type="ChEBI" id="CHEBI:15377"/>
        <dbReference type="ChEBI" id="CHEBI:15378"/>
        <dbReference type="ChEBI" id="CHEBI:16708"/>
        <dbReference type="ChEBI" id="CHEBI:17368"/>
        <dbReference type="ChEBI" id="CHEBI:28938"/>
        <dbReference type="EC" id="3.5.4.2"/>
    </reaction>
</comment>
<comment type="similarity">
    <text evidence="2">Belongs to the metallo-dependent hydrolases superfamily. Adenine deaminase family.</text>
</comment>
<name>YERA_BACSU</name>
<organism>
    <name type="scientific">Bacillus subtilis (strain 168)</name>
    <dbReference type="NCBI Taxonomy" id="224308"/>
    <lineage>
        <taxon>Bacteria</taxon>
        <taxon>Bacillati</taxon>
        <taxon>Bacillota</taxon>
        <taxon>Bacilli</taxon>
        <taxon>Bacillales</taxon>
        <taxon>Bacillaceae</taxon>
        <taxon>Bacillus</taxon>
    </lineage>
</organism>
<feature type="chain" id="PRO_0000142447" description="Putative adenine deaminase YerA">
    <location>
        <begin position="1"/>
        <end position="580"/>
    </location>
</feature>
<feature type="modified residue" description="Phosphoserine" evidence="1">
    <location>
        <position position="399"/>
    </location>
</feature>
<feature type="sequence conflict" description="In Ref. 2; AAB72188." evidence="2" ref="2">
    <original>L</original>
    <variation>M</variation>
    <location>
        <position position="533"/>
    </location>
</feature>
<feature type="sequence conflict" description="In Ref. 2; AAB72188." evidence="2" ref="2">
    <original>C</original>
    <variation>R</variation>
    <location>
        <position position="541"/>
    </location>
</feature>
<feature type="sequence conflict" description="In Ref. 2; AAB72188." evidence="2" ref="2">
    <original>LQ</original>
    <variation>WE</variation>
    <location>
        <begin position="550"/>
        <end position="551"/>
    </location>
</feature>
<feature type="sequence conflict" description="In Ref. 2; AAB72188." evidence="2" ref="2">
    <original>H</original>
    <variation>D</variation>
    <location>
        <position position="554"/>
    </location>
</feature>